<keyword id="KW-0002">3D-structure</keyword>
<keyword id="KW-0238">DNA-binding</keyword>
<keyword id="KW-0539">Nucleus</keyword>
<keyword id="KW-0597">Phosphoprotein</keyword>
<keyword id="KW-1267">Proteomics identification</keyword>
<keyword id="KW-1185">Reference proteome</keyword>
<keyword id="KW-0694">RNA-binding</keyword>
<name>SURF6_HUMAN</name>
<dbReference type="EMBL" id="AF186772">
    <property type="protein sequence ID" value="AAD56587.1"/>
    <property type="molecule type" value="Genomic_DNA"/>
</dbReference>
<dbReference type="EMBL" id="AL158826">
    <property type="protein sequence ID" value="CAI12825.1"/>
    <property type="molecule type" value="Genomic_DNA"/>
</dbReference>
<dbReference type="EMBL" id="CH471090">
    <property type="protein sequence ID" value="EAW88055.1"/>
    <property type="molecule type" value="Genomic_DNA"/>
</dbReference>
<dbReference type="EMBL" id="BC003001">
    <property type="protein sequence ID" value="AAH03001.1"/>
    <property type="molecule type" value="mRNA"/>
</dbReference>
<dbReference type="EMBL" id="BC006197">
    <property type="protein sequence ID" value="AAH06197.1"/>
    <property type="molecule type" value="mRNA"/>
</dbReference>
<dbReference type="EMBL" id="BC014878">
    <property type="protein sequence ID" value="AAH14878.1"/>
    <property type="molecule type" value="mRNA"/>
</dbReference>
<dbReference type="EMBL" id="AJ224639">
    <property type="protein sequence ID" value="CAA12054.1"/>
    <property type="molecule type" value="Genomic_DNA"/>
</dbReference>
<dbReference type="CCDS" id="CCDS6962.1"/>
<dbReference type="RefSeq" id="NP_001265871.1">
    <property type="nucleotide sequence ID" value="NM_001278942.1"/>
</dbReference>
<dbReference type="RefSeq" id="NP_006744.2">
    <property type="nucleotide sequence ID" value="NM_006753.5"/>
</dbReference>
<dbReference type="PDB" id="8FKP">
    <property type="method" value="EM"/>
    <property type="resolution" value="2.85 A"/>
    <property type="chains" value="NE=1-361"/>
</dbReference>
<dbReference type="PDB" id="8FKQ">
    <property type="method" value="EM"/>
    <property type="resolution" value="2.76 A"/>
    <property type="chains" value="NE=1-361"/>
</dbReference>
<dbReference type="PDB" id="8FKR">
    <property type="method" value="EM"/>
    <property type="resolution" value="2.89 A"/>
    <property type="chains" value="NE=1-361"/>
</dbReference>
<dbReference type="PDB" id="8FKS">
    <property type="method" value="EM"/>
    <property type="resolution" value="2.88 A"/>
    <property type="chains" value="NE=1-361"/>
</dbReference>
<dbReference type="PDBsum" id="8FKP"/>
<dbReference type="PDBsum" id="8FKQ"/>
<dbReference type="PDBsum" id="8FKR"/>
<dbReference type="PDBsum" id="8FKS"/>
<dbReference type="EMDB" id="EMD-29252"/>
<dbReference type="EMDB" id="EMD-29253"/>
<dbReference type="EMDB" id="EMD-29254"/>
<dbReference type="EMDB" id="EMD-29255"/>
<dbReference type="SMR" id="O75683"/>
<dbReference type="BioGRID" id="112705">
    <property type="interactions" value="466"/>
</dbReference>
<dbReference type="FunCoup" id="O75683">
    <property type="interactions" value="1808"/>
</dbReference>
<dbReference type="IntAct" id="O75683">
    <property type="interactions" value="335"/>
</dbReference>
<dbReference type="STRING" id="9606.ENSP00000361092"/>
<dbReference type="iPTMnet" id="O75683"/>
<dbReference type="PhosphoSitePlus" id="O75683"/>
<dbReference type="SwissPalm" id="O75683"/>
<dbReference type="BioMuta" id="SURF6"/>
<dbReference type="jPOST" id="O75683"/>
<dbReference type="MassIVE" id="O75683"/>
<dbReference type="PaxDb" id="9606-ENSP00000361092"/>
<dbReference type="PeptideAtlas" id="O75683"/>
<dbReference type="ProteomicsDB" id="50156"/>
<dbReference type="Pumba" id="O75683"/>
<dbReference type="Antibodypedia" id="18324">
    <property type="antibodies" value="111 antibodies from 17 providers"/>
</dbReference>
<dbReference type="DNASU" id="6838"/>
<dbReference type="Ensembl" id="ENST00000372022.6">
    <property type="protein sequence ID" value="ENSP00000361092.4"/>
    <property type="gene ID" value="ENSG00000148296.7"/>
</dbReference>
<dbReference type="Ensembl" id="ENST00000629980.2">
    <property type="protein sequence ID" value="ENSP00000485909.1"/>
    <property type="gene ID" value="ENSG00000281309.2"/>
</dbReference>
<dbReference type="GeneID" id="6838"/>
<dbReference type="KEGG" id="hsa:6838"/>
<dbReference type="MANE-Select" id="ENST00000372022.6">
    <property type="protein sequence ID" value="ENSP00000361092.4"/>
    <property type="RefSeq nucleotide sequence ID" value="NM_006753.6"/>
    <property type="RefSeq protein sequence ID" value="NP_006744.2"/>
</dbReference>
<dbReference type="UCSC" id="uc004cdb.6">
    <property type="organism name" value="human"/>
</dbReference>
<dbReference type="AGR" id="HGNC:11478"/>
<dbReference type="CTD" id="6838"/>
<dbReference type="DisGeNET" id="6838"/>
<dbReference type="GeneCards" id="SURF6"/>
<dbReference type="HGNC" id="HGNC:11478">
    <property type="gene designation" value="SURF6"/>
</dbReference>
<dbReference type="HPA" id="ENSG00000148296">
    <property type="expression patterns" value="Low tissue specificity"/>
</dbReference>
<dbReference type="MIM" id="185642">
    <property type="type" value="gene"/>
</dbReference>
<dbReference type="neXtProt" id="NX_O75683"/>
<dbReference type="OpenTargets" id="ENSG00000148296"/>
<dbReference type="PharmGKB" id="PA36263"/>
<dbReference type="VEuPathDB" id="HostDB:ENSG00000148296"/>
<dbReference type="eggNOG" id="KOG2885">
    <property type="taxonomic scope" value="Eukaryota"/>
</dbReference>
<dbReference type="GeneTree" id="ENSGT00390000006980"/>
<dbReference type="HOGENOM" id="CLU_067122_0_0_1"/>
<dbReference type="InParanoid" id="O75683"/>
<dbReference type="OMA" id="QKKRTDN"/>
<dbReference type="OrthoDB" id="444809at2759"/>
<dbReference type="PAN-GO" id="O75683">
    <property type="GO annotations" value="5 GO annotations based on evolutionary models"/>
</dbReference>
<dbReference type="PhylomeDB" id="O75683"/>
<dbReference type="TreeFam" id="TF321608"/>
<dbReference type="PathwayCommons" id="O75683"/>
<dbReference type="SignaLink" id="O75683"/>
<dbReference type="BioGRID-ORCS" id="6838">
    <property type="hits" value="492 hits in 1161 CRISPR screens"/>
</dbReference>
<dbReference type="CD-CODE" id="91857CE7">
    <property type="entry name" value="Nucleolus"/>
</dbReference>
<dbReference type="CD-CODE" id="CBF57B02">
    <property type="entry name" value="Synthetic Condensate 000043"/>
</dbReference>
<dbReference type="ChiTaRS" id="SURF6">
    <property type="organism name" value="human"/>
</dbReference>
<dbReference type="GeneWiki" id="SURF6"/>
<dbReference type="GenomeRNAi" id="6838"/>
<dbReference type="Pharos" id="O75683">
    <property type="development level" value="Tbio"/>
</dbReference>
<dbReference type="PRO" id="PR:O75683"/>
<dbReference type="Proteomes" id="UP000005640">
    <property type="component" value="Chromosome 9"/>
</dbReference>
<dbReference type="RNAct" id="O75683">
    <property type="molecule type" value="protein"/>
</dbReference>
<dbReference type="Bgee" id="ENSG00000148296">
    <property type="expression patterns" value="Expressed in sural nerve and 98 other cell types or tissues"/>
</dbReference>
<dbReference type="GO" id="GO:0005694">
    <property type="term" value="C:chromosome"/>
    <property type="evidence" value="ECO:0000314"/>
    <property type="project" value="HPA"/>
</dbReference>
<dbReference type="GO" id="GO:0001652">
    <property type="term" value="C:granular component"/>
    <property type="evidence" value="ECO:0000250"/>
    <property type="project" value="UniProtKB"/>
</dbReference>
<dbReference type="GO" id="GO:0005730">
    <property type="term" value="C:nucleolus"/>
    <property type="evidence" value="ECO:0000314"/>
    <property type="project" value="HPA"/>
</dbReference>
<dbReference type="GO" id="GO:0005654">
    <property type="term" value="C:nucleoplasm"/>
    <property type="evidence" value="ECO:0000314"/>
    <property type="project" value="HPA"/>
</dbReference>
<dbReference type="GO" id="GO:0003677">
    <property type="term" value="F:DNA binding"/>
    <property type="evidence" value="ECO:0000250"/>
    <property type="project" value="UniProtKB"/>
</dbReference>
<dbReference type="GO" id="GO:0140693">
    <property type="term" value="F:molecular condensate scaffold activity"/>
    <property type="evidence" value="ECO:0000314"/>
    <property type="project" value="DisProt"/>
</dbReference>
<dbReference type="GO" id="GO:0003723">
    <property type="term" value="F:RNA binding"/>
    <property type="evidence" value="ECO:0007005"/>
    <property type="project" value="UniProtKB"/>
</dbReference>
<dbReference type="GO" id="GO:0042273">
    <property type="term" value="P:ribosomal large subunit biogenesis"/>
    <property type="evidence" value="ECO:0000318"/>
    <property type="project" value="GO_Central"/>
</dbReference>
<dbReference type="GO" id="GO:0042274">
    <property type="term" value="P:ribosomal small subunit biogenesis"/>
    <property type="evidence" value="ECO:0000318"/>
    <property type="project" value="GO_Central"/>
</dbReference>
<dbReference type="DisProt" id="DP02009"/>
<dbReference type="InterPro" id="IPR029190">
    <property type="entry name" value="Rrp14/SURF6_C"/>
</dbReference>
<dbReference type="InterPro" id="IPR007019">
    <property type="entry name" value="SURF6"/>
</dbReference>
<dbReference type="PANTHER" id="PTHR14369">
    <property type="entry name" value="SURFEIT LOCUS PROTEIN 6"/>
    <property type="match status" value="1"/>
</dbReference>
<dbReference type="PANTHER" id="PTHR14369:SF0">
    <property type="entry name" value="SURFEIT LOCUS PROTEIN 6"/>
    <property type="match status" value="1"/>
</dbReference>
<dbReference type="Pfam" id="PF04935">
    <property type="entry name" value="SURF6"/>
    <property type="match status" value="1"/>
</dbReference>
<evidence type="ECO:0000250" key="1"/>
<evidence type="ECO:0000255" key="2"/>
<evidence type="ECO:0000256" key="3">
    <source>
        <dbReference type="SAM" id="MobiDB-lite"/>
    </source>
</evidence>
<evidence type="ECO:0000305" key="4"/>
<evidence type="ECO:0007744" key="5">
    <source>
    </source>
</evidence>
<evidence type="ECO:0007744" key="6">
    <source>
    </source>
</evidence>
<evidence type="ECO:0007744" key="7">
    <source>
    </source>
</evidence>
<evidence type="ECO:0007744" key="8">
    <source>
    </source>
</evidence>
<evidence type="ECO:0007744" key="9">
    <source>
    </source>
</evidence>
<evidence type="ECO:0007744" key="10">
    <source>
    </source>
</evidence>
<sequence length="361" mass="41450">MASLLAKDAYLQSLAKKICSHSAPEQQARTRAGKTQGSETAGPPKKKRKKTQKKFRKREEKAAEHKAKSLGEKSPAASGARRPEAAKEEAAWASSSAGNPADGLATEPESVFALDVLRQRLHEKIQEARGQGSAKELSPAALEKRRRRKQERDRKKRKRKELRAKEKARKAEEATEAQEVVEATPEGACTEPREPPGLIFNKVEVSEDEPASKAQRRKEKRQRVKGNLTPLTGRNYRQLLERLQARQSRLDELRGQDEGKAQELEAKMKWTNLLYKAEGVKIRDDERLLQEALKRKEKRRAQRQRRWEKRTAGVVEKMQQRQDRRRQNLRRKKAARAERRLLRARKKGRILPQDLERAGLV</sequence>
<gene>
    <name type="primary">SURF6</name>
    <name type="synonym">SURF-6</name>
</gene>
<comment type="function">
    <text evidence="1">Binds to both DNA and RNA in vitro, with a stronger binding capacity for RNA. May represent a nucleolar constitutive protein involved in ribosomal biosynthesis or assembly (By similarity).</text>
</comment>
<comment type="interaction">
    <interactant intactId="EBI-2691252">
        <id>O75683</id>
    </interactant>
    <interactant intactId="EBI-347804">
        <id>P68400</id>
        <label>CSNK2A1</label>
    </interactant>
    <organismsDiffer>false</organismsDiffer>
    <experiments>2</experiments>
</comment>
<comment type="interaction">
    <interactant intactId="EBI-2691252">
        <id>O75683</id>
    </interactant>
    <interactant intactId="EBI-10175124">
        <id>Q8IZU0</id>
        <label>FAM9B</label>
    </interactant>
    <organismsDiffer>false</organismsDiffer>
    <experiments>3</experiments>
</comment>
<comment type="interaction">
    <interactant intactId="EBI-2691252">
        <id>O75683</id>
    </interactant>
    <interactant intactId="EBI-354533">
        <id>P35268</id>
        <label>RPL22</label>
    </interactant>
    <organismsDiffer>false</organismsDiffer>
    <experiments>3</experiments>
</comment>
<comment type="subcellular location">
    <subcellularLocation>
        <location evidence="1">Nucleus</location>
        <location evidence="1">Nucleoplasm</location>
    </subcellularLocation>
    <subcellularLocation>
        <location evidence="1">Nucleus</location>
        <location evidence="1">Nucleolus</location>
    </subcellularLocation>
    <text evidence="1">Granular component of the nucleolus.</text>
</comment>
<comment type="similarity">
    <text evidence="4">Belongs to the SURF6 family.</text>
</comment>
<accession>O75683</accession>
<accession>Q5T8U1</accession>
<accession>Q9BRK9</accession>
<accession>Q9BTZ5</accession>
<accession>Q9UK24</accession>
<protein>
    <recommendedName>
        <fullName>Surfeit locus protein 6</fullName>
    </recommendedName>
</protein>
<reference key="1">
    <citation type="journal article" date="2000" name="Gene">
        <title>Isolation and genomic analysis of the human surf-6 gene: a member of the Surfeit locus.</title>
        <authorList>
            <person name="Magoulas C."/>
            <person name="Fried M."/>
        </authorList>
    </citation>
    <scope>NUCLEOTIDE SEQUENCE [GENOMIC DNA]</scope>
</reference>
<reference key="2">
    <citation type="journal article" date="2004" name="Nature">
        <title>DNA sequence and analysis of human chromosome 9.</title>
        <authorList>
            <person name="Humphray S.J."/>
            <person name="Oliver K."/>
            <person name="Hunt A.R."/>
            <person name="Plumb R.W."/>
            <person name="Loveland J.E."/>
            <person name="Howe K.L."/>
            <person name="Andrews T.D."/>
            <person name="Searle S."/>
            <person name="Hunt S.E."/>
            <person name="Scott C.E."/>
            <person name="Jones M.C."/>
            <person name="Ainscough R."/>
            <person name="Almeida J.P."/>
            <person name="Ambrose K.D."/>
            <person name="Ashwell R.I.S."/>
            <person name="Babbage A.K."/>
            <person name="Babbage S."/>
            <person name="Bagguley C.L."/>
            <person name="Bailey J."/>
            <person name="Banerjee R."/>
            <person name="Barker D.J."/>
            <person name="Barlow K.F."/>
            <person name="Bates K."/>
            <person name="Beasley H."/>
            <person name="Beasley O."/>
            <person name="Bird C.P."/>
            <person name="Bray-Allen S."/>
            <person name="Brown A.J."/>
            <person name="Brown J.Y."/>
            <person name="Burford D."/>
            <person name="Burrill W."/>
            <person name="Burton J."/>
            <person name="Carder C."/>
            <person name="Carter N.P."/>
            <person name="Chapman J.C."/>
            <person name="Chen Y."/>
            <person name="Clarke G."/>
            <person name="Clark S.Y."/>
            <person name="Clee C.M."/>
            <person name="Clegg S."/>
            <person name="Collier R.E."/>
            <person name="Corby N."/>
            <person name="Crosier M."/>
            <person name="Cummings A.T."/>
            <person name="Davies J."/>
            <person name="Dhami P."/>
            <person name="Dunn M."/>
            <person name="Dutta I."/>
            <person name="Dyer L.W."/>
            <person name="Earthrowl M.E."/>
            <person name="Faulkner L."/>
            <person name="Fleming C.J."/>
            <person name="Frankish A."/>
            <person name="Frankland J.A."/>
            <person name="French L."/>
            <person name="Fricker D.G."/>
            <person name="Garner P."/>
            <person name="Garnett J."/>
            <person name="Ghori J."/>
            <person name="Gilbert J.G.R."/>
            <person name="Glison C."/>
            <person name="Grafham D.V."/>
            <person name="Gribble S."/>
            <person name="Griffiths C."/>
            <person name="Griffiths-Jones S."/>
            <person name="Grocock R."/>
            <person name="Guy J."/>
            <person name="Hall R.E."/>
            <person name="Hammond S."/>
            <person name="Harley J.L."/>
            <person name="Harrison E.S.I."/>
            <person name="Hart E.A."/>
            <person name="Heath P.D."/>
            <person name="Henderson C.D."/>
            <person name="Hopkins B.L."/>
            <person name="Howard P.J."/>
            <person name="Howden P.J."/>
            <person name="Huckle E."/>
            <person name="Johnson C."/>
            <person name="Johnson D."/>
            <person name="Joy A.A."/>
            <person name="Kay M."/>
            <person name="Keenan S."/>
            <person name="Kershaw J.K."/>
            <person name="Kimberley A.M."/>
            <person name="King A."/>
            <person name="Knights A."/>
            <person name="Laird G.K."/>
            <person name="Langford C."/>
            <person name="Lawlor S."/>
            <person name="Leongamornlert D.A."/>
            <person name="Leversha M."/>
            <person name="Lloyd C."/>
            <person name="Lloyd D.M."/>
            <person name="Lovell J."/>
            <person name="Martin S."/>
            <person name="Mashreghi-Mohammadi M."/>
            <person name="Matthews L."/>
            <person name="McLaren S."/>
            <person name="McLay K.E."/>
            <person name="McMurray A."/>
            <person name="Milne S."/>
            <person name="Nickerson T."/>
            <person name="Nisbett J."/>
            <person name="Nordsiek G."/>
            <person name="Pearce A.V."/>
            <person name="Peck A.I."/>
            <person name="Porter K.M."/>
            <person name="Pandian R."/>
            <person name="Pelan S."/>
            <person name="Phillimore B."/>
            <person name="Povey S."/>
            <person name="Ramsey Y."/>
            <person name="Rand V."/>
            <person name="Scharfe M."/>
            <person name="Sehra H.K."/>
            <person name="Shownkeen R."/>
            <person name="Sims S.K."/>
            <person name="Skuce C.D."/>
            <person name="Smith M."/>
            <person name="Steward C.A."/>
            <person name="Swarbreck D."/>
            <person name="Sycamore N."/>
            <person name="Tester J."/>
            <person name="Thorpe A."/>
            <person name="Tracey A."/>
            <person name="Tromans A."/>
            <person name="Thomas D.W."/>
            <person name="Wall M."/>
            <person name="Wallis J.M."/>
            <person name="West A.P."/>
            <person name="Whitehead S.L."/>
            <person name="Willey D.L."/>
            <person name="Williams S.A."/>
            <person name="Wilming L."/>
            <person name="Wray P.W."/>
            <person name="Young L."/>
            <person name="Ashurst J.L."/>
            <person name="Coulson A."/>
            <person name="Blocker H."/>
            <person name="Durbin R.M."/>
            <person name="Sulston J.E."/>
            <person name="Hubbard T."/>
            <person name="Jackson M.J."/>
            <person name="Bentley D.R."/>
            <person name="Beck S."/>
            <person name="Rogers J."/>
            <person name="Dunham I."/>
        </authorList>
    </citation>
    <scope>NUCLEOTIDE SEQUENCE [LARGE SCALE GENOMIC DNA]</scope>
</reference>
<reference key="3">
    <citation type="submission" date="2005-07" db="EMBL/GenBank/DDBJ databases">
        <authorList>
            <person name="Mural R.J."/>
            <person name="Istrail S."/>
            <person name="Sutton G.G."/>
            <person name="Florea L."/>
            <person name="Halpern A.L."/>
            <person name="Mobarry C.M."/>
            <person name="Lippert R."/>
            <person name="Walenz B."/>
            <person name="Shatkay H."/>
            <person name="Dew I."/>
            <person name="Miller J.R."/>
            <person name="Flanigan M.J."/>
            <person name="Edwards N.J."/>
            <person name="Bolanos R."/>
            <person name="Fasulo D."/>
            <person name="Halldorsson B.V."/>
            <person name="Hannenhalli S."/>
            <person name="Turner R."/>
            <person name="Yooseph S."/>
            <person name="Lu F."/>
            <person name="Nusskern D.R."/>
            <person name="Shue B.C."/>
            <person name="Zheng X.H."/>
            <person name="Zhong F."/>
            <person name="Delcher A.L."/>
            <person name="Huson D.H."/>
            <person name="Kravitz S.A."/>
            <person name="Mouchard L."/>
            <person name="Reinert K."/>
            <person name="Remington K.A."/>
            <person name="Clark A.G."/>
            <person name="Waterman M.S."/>
            <person name="Eichler E.E."/>
            <person name="Adams M.D."/>
            <person name="Hunkapiller M.W."/>
            <person name="Myers E.W."/>
            <person name="Venter J.C."/>
        </authorList>
    </citation>
    <scope>NUCLEOTIDE SEQUENCE [LARGE SCALE GENOMIC DNA]</scope>
</reference>
<reference key="4">
    <citation type="journal article" date="2004" name="Genome Res.">
        <title>The status, quality, and expansion of the NIH full-length cDNA project: the Mammalian Gene Collection (MGC).</title>
        <authorList>
            <consortium name="The MGC Project Team"/>
        </authorList>
    </citation>
    <scope>NUCLEOTIDE SEQUENCE [LARGE SCALE MRNA]</scope>
    <source>
        <tissue>Lung</tissue>
        <tissue>Lymph</tissue>
    </source>
</reference>
<reference key="5">
    <citation type="journal article" date="2002" name="Gene">
        <title>The human homologue of the mouse Surf5 gene encodes multiple alternatively spliced transcripts.</title>
        <authorList>
            <person name="Angiolillo A."/>
            <person name="Russo G."/>
            <person name="Porcellini A."/>
            <person name="Smaldone S."/>
            <person name="D'Alessandro F."/>
            <person name="Pietropaolo C."/>
        </authorList>
    </citation>
    <scope>NUCLEOTIDE SEQUENCE [GENOMIC DNA] OF 1-31</scope>
</reference>
<reference key="6">
    <citation type="journal article" date="2007" name="J. Proteome Res.">
        <title>Improved titanium dioxide enrichment of phosphopeptides from HeLa cells and high confident phosphopeptide identification by cross-validation of MS/MS and MS/MS/MS spectra.</title>
        <authorList>
            <person name="Yu L.R."/>
            <person name="Zhu Z."/>
            <person name="Chan K.C."/>
            <person name="Issaq H.J."/>
            <person name="Dimitrov D.S."/>
            <person name="Veenstra T.D."/>
        </authorList>
    </citation>
    <scope>PHOSPHORYLATION [LARGE SCALE ANALYSIS] AT SER-74</scope>
    <scope>IDENTIFICATION BY MASS SPECTROMETRY [LARGE SCALE ANALYSIS]</scope>
    <source>
        <tissue>Cervix carcinoma</tissue>
    </source>
</reference>
<reference key="7">
    <citation type="journal article" date="2008" name="Mol. Cell">
        <title>Kinase-selective enrichment enables quantitative phosphoproteomics of the kinome across the cell cycle.</title>
        <authorList>
            <person name="Daub H."/>
            <person name="Olsen J.V."/>
            <person name="Bairlein M."/>
            <person name="Gnad F."/>
            <person name="Oppermann F.S."/>
            <person name="Korner R."/>
            <person name="Greff Z."/>
            <person name="Keri G."/>
            <person name="Stemmann O."/>
            <person name="Mann M."/>
        </authorList>
    </citation>
    <scope>PHOSPHORYLATION [LARGE SCALE ANALYSIS] AT SER-74 AND SER-138</scope>
    <scope>IDENTIFICATION BY MASS SPECTROMETRY [LARGE SCALE ANALYSIS]</scope>
    <source>
        <tissue>Cervix carcinoma</tissue>
    </source>
</reference>
<reference key="8">
    <citation type="journal article" date="2008" name="Proc. Natl. Acad. Sci. U.S.A.">
        <title>A quantitative atlas of mitotic phosphorylation.</title>
        <authorList>
            <person name="Dephoure N."/>
            <person name="Zhou C."/>
            <person name="Villen J."/>
            <person name="Beausoleil S.A."/>
            <person name="Bakalarski C.E."/>
            <person name="Elledge S.J."/>
            <person name="Gygi S.P."/>
        </authorList>
    </citation>
    <scope>PHOSPHORYLATION [LARGE SCALE ANALYSIS] AT SER-74 AND THR-229</scope>
    <scope>IDENTIFICATION BY MASS SPECTROMETRY [LARGE SCALE ANALYSIS]</scope>
    <source>
        <tissue>Cervix carcinoma</tissue>
    </source>
</reference>
<reference key="9">
    <citation type="journal article" date="2009" name="Anal. Chem.">
        <title>Lys-N and trypsin cover complementary parts of the phosphoproteome in a refined SCX-based approach.</title>
        <authorList>
            <person name="Gauci S."/>
            <person name="Helbig A.O."/>
            <person name="Slijper M."/>
            <person name="Krijgsveld J."/>
            <person name="Heck A.J."/>
            <person name="Mohammed S."/>
        </authorList>
    </citation>
    <scope>IDENTIFICATION BY MASS SPECTROMETRY [LARGE SCALE ANALYSIS]</scope>
</reference>
<reference key="10">
    <citation type="journal article" date="2010" name="Sci. Signal.">
        <title>Quantitative phosphoproteomics reveals widespread full phosphorylation site occupancy during mitosis.</title>
        <authorList>
            <person name="Olsen J.V."/>
            <person name="Vermeulen M."/>
            <person name="Santamaria A."/>
            <person name="Kumar C."/>
            <person name="Miller M.L."/>
            <person name="Jensen L.J."/>
            <person name="Gnad F."/>
            <person name="Cox J."/>
            <person name="Jensen T.S."/>
            <person name="Nigg E.A."/>
            <person name="Brunak S."/>
            <person name="Mann M."/>
        </authorList>
    </citation>
    <scope>PHOSPHORYLATION [LARGE SCALE ANALYSIS] AT SER-138</scope>
    <scope>IDENTIFICATION BY MASS SPECTROMETRY [LARGE SCALE ANALYSIS]</scope>
    <source>
        <tissue>Cervix carcinoma</tissue>
    </source>
</reference>
<reference key="11">
    <citation type="journal article" date="2011" name="Sci. Signal.">
        <title>System-wide temporal characterization of the proteome and phosphoproteome of human embryonic stem cell differentiation.</title>
        <authorList>
            <person name="Rigbolt K.T."/>
            <person name="Prokhorova T.A."/>
            <person name="Akimov V."/>
            <person name="Henningsen J."/>
            <person name="Johansen P.T."/>
            <person name="Kratchmarova I."/>
            <person name="Kassem M."/>
            <person name="Mann M."/>
            <person name="Olsen J.V."/>
            <person name="Blagoev B."/>
        </authorList>
    </citation>
    <scope>PHOSPHORYLATION [LARGE SCALE ANALYSIS] AT SER-138</scope>
    <scope>IDENTIFICATION BY MASS SPECTROMETRY [LARGE SCALE ANALYSIS]</scope>
</reference>
<reference key="12">
    <citation type="journal article" date="2013" name="J. Proteome Res.">
        <title>Toward a comprehensive characterization of a human cancer cell phosphoproteome.</title>
        <authorList>
            <person name="Zhou H."/>
            <person name="Di Palma S."/>
            <person name="Preisinger C."/>
            <person name="Peng M."/>
            <person name="Polat A.N."/>
            <person name="Heck A.J."/>
            <person name="Mohammed S."/>
        </authorList>
    </citation>
    <scope>PHOSPHORYLATION [LARGE SCALE ANALYSIS] AT SER-74; SER-138 AND THR-229</scope>
    <scope>IDENTIFICATION BY MASS SPECTROMETRY [LARGE SCALE ANALYSIS]</scope>
    <source>
        <tissue>Cervix carcinoma</tissue>
        <tissue>Erythroleukemia</tissue>
    </source>
</reference>
<feature type="chain" id="PRO_0000220969" description="Surfeit locus protein 6">
    <location>
        <begin position="1"/>
        <end position="361"/>
    </location>
</feature>
<feature type="region of interest" description="Disordered" evidence="3">
    <location>
        <begin position="20"/>
        <end position="106"/>
    </location>
</feature>
<feature type="region of interest" description="Disordered" evidence="3">
    <location>
        <begin position="125"/>
        <end position="230"/>
    </location>
</feature>
<feature type="region of interest" description="Disordered" evidence="3">
    <location>
        <begin position="299"/>
        <end position="334"/>
    </location>
</feature>
<feature type="short sequence motif" description="Nuclear localization signal" evidence="2">
    <location>
        <begin position="45"/>
        <end position="49"/>
    </location>
</feature>
<feature type="short sequence motif" description="Nuclear localization signal" evidence="2">
    <location>
        <begin position="154"/>
        <end position="158"/>
    </location>
</feature>
<feature type="compositionally biased region" description="Polar residues" evidence="3">
    <location>
        <begin position="23"/>
        <end position="39"/>
    </location>
</feature>
<feature type="compositionally biased region" description="Basic residues" evidence="3">
    <location>
        <begin position="44"/>
        <end position="56"/>
    </location>
</feature>
<feature type="compositionally biased region" description="Basic and acidic residues" evidence="3">
    <location>
        <begin position="57"/>
        <end position="71"/>
    </location>
</feature>
<feature type="compositionally biased region" description="Basic and acidic residues" evidence="3">
    <location>
        <begin position="81"/>
        <end position="90"/>
    </location>
</feature>
<feature type="compositionally biased region" description="Basic residues" evidence="3">
    <location>
        <begin position="144"/>
        <end position="162"/>
    </location>
</feature>
<feature type="compositionally biased region" description="Basic and acidic residues" evidence="3">
    <location>
        <begin position="163"/>
        <end position="173"/>
    </location>
</feature>
<feature type="compositionally biased region" description="Low complexity" evidence="3">
    <location>
        <begin position="177"/>
        <end position="186"/>
    </location>
</feature>
<feature type="compositionally biased region" description="Basic residues" evidence="3">
    <location>
        <begin position="214"/>
        <end position="224"/>
    </location>
</feature>
<feature type="compositionally biased region" description="Basic residues" evidence="3">
    <location>
        <begin position="299"/>
        <end position="308"/>
    </location>
</feature>
<feature type="modified residue" description="Phosphoserine" evidence="5 6 7 10">
    <location>
        <position position="74"/>
    </location>
</feature>
<feature type="modified residue" description="Phosphoserine" evidence="7 8 9 10">
    <location>
        <position position="138"/>
    </location>
</feature>
<feature type="modified residue" description="Phosphothreonine" evidence="6 10">
    <location>
        <position position="229"/>
    </location>
</feature>
<feature type="sequence variant" id="VAR_014532" description="In dbSNP:rs886090.">
    <original>R</original>
    <variation>W</variation>
    <location>
        <position position="163"/>
    </location>
</feature>
<feature type="sequence variant" id="VAR_014533" description="In dbSNP:rs886089.">
    <original>T</original>
    <variation>M</variation>
    <location>
        <position position="175"/>
    </location>
</feature>
<feature type="sequence variant" id="VAR_052199" description="In dbSNP:rs34657219.">
    <original>R</original>
    <variation>Q</variation>
    <location>
        <position position="193"/>
    </location>
</feature>
<feature type="sequence variant" id="VAR_052200" description="In dbSNP:rs35316446.">
    <original>N</original>
    <variation>H</variation>
    <location>
        <position position="201"/>
    </location>
</feature>
<feature type="sequence variant" id="VAR_014534" description="In dbSNP:rs1800867.">
    <original>T</original>
    <variation>M</variation>
    <location>
        <position position="311"/>
    </location>
</feature>
<feature type="sequence conflict" description="In Ref. 5; CAA12054." evidence="4" ref="5">
    <original>A</original>
    <variation>T</variation>
    <location>
        <position position="6"/>
    </location>
</feature>
<feature type="sequence conflict" description="In Ref. 1; AAD56587." evidence="4" ref="1">
    <original>D</original>
    <variation>N</variation>
    <location>
        <position position="102"/>
    </location>
</feature>
<organism>
    <name type="scientific">Homo sapiens</name>
    <name type="common">Human</name>
    <dbReference type="NCBI Taxonomy" id="9606"/>
    <lineage>
        <taxon>Eukaryota</taxon>
        <taxon>Metazoa</taxon>
        <taxon>Chordata</taxon>
        <taxon>Craniata</taxon>
        <taxon>Vertebrata</taxon>
        <taxon>Euteleostomi</taxon>
        <taxon>Mammalia</taxon>
        <taxon>Eutheria</taxon>
        <taxon>Euarchontoglires</taxon>
        <taxon>Primates</taxon>
        <taxon>Haplorrhini</taxon>
        <taxon>Catarrhini</taxon>
        <taxon>Hominidae</taxon>
        <taxon>Homo</taxon>
    </lineage>
</organism>
<proteinExistence type="evidence at protein level"/>